<proteinExistence type="inferred from homology"/>
<evidence type="ECO:0000255" key="1">
    <source>
        <dbReference type="HAMAP-Rule" id="MF_00184"/>
    </source>
</evidence>
<evidence type="ECO:0000255" key="2">
    <source>
        <dbReference type="PROSITE-ProRule" id="PRU01228"/>
    </source>
</evidence>
<dbReference type="EC" id="6.1.1.3" evidence="1"/>
<dbReference type="EMBL" id="CP001132">
    <property type="protein sequence ID" value="ACH84446.1"/>
    <property type="molecule type" value="Genomic_DNA"/>
</dbReference>
<dbReference type="RefSeq" id="WP_012537294.1">
    <property type="nucleotide sequence ID" value="NC_011206.1"/>
</dbReference>
<dbReference type="SMR" id="B5EN57"/>
<dbReference type="GeneID" id="65281664"/>
<dbReference type="KEGG" id="afe:Lferr_2243"/>
<dbReference type="eggNOG" id="COG0441">
    <property type="taxonomic scope" value="Bacteria"/>
</dbReference>
<dbReference type="HOGENOM" id="CLU_008554_0_1_6"/>
<dbReference type="GO" id="GO:0005737">
    <property type="term" value="C:cytoplasm"/>
    <property type="evidence" value="ECO:0007669"/>
    <property type="project" value="UniProtKB-SubCell"/>
</dbReference>
<dbReference type="GO" id="GO:0005524">
    <property type="term" value="F:ATP binding"/>
    <property type="evidence" value="ECO:0007669"/>
    <property type="project" value="UniProtKB-UniRule"/>
</dbReference>
<dbReference type="GO" id="GO:0046872">
    <property type="term" value="F:metal ion binding"/>
    <property type="evidence" value="ECO:0007669"/>
    <property type="project" value="UniProtKB-KW"/>
</dbReference>
<dbReference type="GO" id="GO:0004829">
    <property type="term" value="F:threonine-tRNA ligase activity"/>
    <property type="evidence" value="ECO:0007669"/>
    <property type="project" value="UniProtKB-UniRule"/>
</dbReference>
<dbReference type="GO" id="GO:0000049">
    <property type="term" value="F:tRNA binding"/>
    <property type="evidence" value="ECO:0007669"/>
    <property type="project" value="UniProtKB-KW"/>
</dbReference>
<dbReference type="GO" id="GO:0006435">
    <property type="term" value="P:threonyl-tRNA aminoacylation"/>
    <property type="evidence" value="ECO:0007669"/>
    <property type="project" value="UniProtKB-UniRule"/>
</dbReference>
<dbReference type="CDD" id="cd01667">
    <property type="entry name" value="TGS_ThrRS"/>
    <property type="match status" value="1"/>
</dbReference>
<dbReference type="CDD" id="cd00860">
    <property type="entry name" value="ThrRS_anticodon"/>
    <property type="match status" value="1"/>
</dbReference>
<dbReference type="CDD" id="cd00771">
    <property type="entry name" value="ThrRS_core"/>
    <property type="match status" value="1"/>
</dbReference>
<dbReference type="FunFam" id="3.10.20.30:FF:000005">
    <property type="entry name" value="Threonine--tRNA ligase"/>
    <property type="match status" value="1"/>
</dbReference>
<dbReference type="FunFam" id="3.30.54.20:FF:000002">
    <property type="entry name" value="Threonine--tRNA ligase"/>
    <property type="match status" value="1"/>
</dbReference>
<dbReference type="FunFam" id="3.30.930.10:FF:000002">
    <property type="entry name" value="Threonine--tRNA ligase"/>
    <property type="match status" value="1"/>
</dbReference>
<dbReference type="FunFam" id="3.40.50.800:FF:000001">
    <property type="entry name" value="Threonine--tRNA ligase"/>
    <property type="match status" value="1"/>
</dbReference>
<dbReference type="FunFam" id="3.30.980.10:FF:000005">
    <property type="entry name" value="Threonyl-tRNA synthetase, mitochondrial"/>
    <property type="match status" value="1"/>
</dbReference>
<dbReference type="Gene3D" id="3.10.20.30">
    <property type="match status" value="1"/>
</dbReference>
<dbReference type="Gene3D" id="3.30.54.20">
    <property type="match status" value="1"/>
</dbReference>
<dbReference type="Gene3D" id="3.40.50.800">
    <property type="entry name" value="Anticodon-binding domain"/>
    <property type="match status" value="1"/>
</dbReference>
<dbReference type="Gene3D" id="3.30.930.10">
    <property type="entry name" value="Bira Bifunctional Protein, Domain 2"/>
    <property type="match status" value="1"/>
</dbReference>
<dbReference type="Gene3D" id="3.30.980.10">
    <property type="entry name" value="Threonyl-trna Synthetase, Chain A, domain 2"/>
    <property type="match status" value="1"/>
</dbReference>
<dbReference type="HAMAP" id="MF_00184">
    <property type="entry name" value="Thr_tRNA_synth"/>
    <property type="match status" value="1"/>
</dbReference>
<dbReference type="InterPro" id="IPR002314">
    <property type="entry name" value="aa-tRNA-synt_IIb"/>
</dbReference>
<dbReference type="InterPro" id="IPR006195">
    <property type="entry name" value="aa-tRNA-synth_II"/>
</dbReference>
<dbReference type="InterPro" id="IPR045864">
    <property type="entry name" value="aa-tRNA-synth_II/BPL/LPL"/>
</dbReference>
<dbReference type="InterPro" id="IPR004154">
    <property type="entry name" value="Anticodon-bd"/>
</dbReference>
<dbReference type="InterPro" id="IPR036621">
    <property type="entry name" value="Anticodon-bd_dom_sf"/>
</dbReference>
<dbReference type="InterPro" id="IPR012675">
    <property type="entry name" value="Beta-grasp_dom_sf"/>
</dbReference>
<dbReference type="InterPro" id="IPR004095">
    <property type="entry name" value="TGS"/>
</dbReference>
<dbReference type="InterPro" id="IPR012676">
    <property type="entry name" value="TGS-like"/>
</dbReference>
<dbReference type="InterPro" id="IPR002320">
    <property type="entry name" value="Thr-tRNA-ligase_IIa"/>
</dbReference>
<dbReference type="InterPro" id="IPR018163">
    <property type="entry name" value="Thr/Ala-tRNA-synth_IIc_edit"/>
</dbReference>
<dbReference type="InterPro" id="IPR047246">
    <property type="entry name" value="ThrRS_anticodon"/>
</dbReference>
<dbReference type="InterPro" id="IPR033728">
    <property type="entry name" value="ThrRS_core"/>
</dbReference>
<dbReference type="InterPro" id="IPR012947">
    <property type="entry name" value="tRNA_SAD"/>
</dbReference>
<dbReference type="NCBIfam" id="TIGR00418">
    <property type="entry name" value="thrS"/>
    <property type="match status" value="1"/>
</dbReference>
<dbReference type="PANTHER" id="PTHR11451:SF44">
    <property type="entry name" value="THREONINE--TRNA LIGASE, CHLOROPLASTIC_MITOCHONDRIAL 2"/>
    <property type="match status" value="1"/>
</dbReference>
<dbReference type="PANTHER" id="PTHR11451">
    <property type="entry name" value="THREONINE-TRNA LIGASE"/>
    <property type="match status" value="1"/>
</dbReference>
<dbReference type="Pfam" id="PF03129">
    <property type="entry name" value="HGTP_anticodon"/>
    <property type="match status" value="1"/>
</dbReference>
<dbReference type="Pfam" id="PF02824">
    <property type="entry name" value="TGS"/>
    <property type="match status" value="1"/>
</dbReference>
<dbReference type="Pfam" id="PF00587">
    <property type="entry name" value="tRNA-synt_2b"/>
    <property type="match status" value="1"/>
</dbReference>
<dbReference type="Pfam" id="PF07973">
    <property type="entry name" value="tRNA_SAD"/>
    <property type="match status" value="1"/>
</dbReference>
<dbReference type="PRINTS" id="PR01047">
    <property type="entry name" value="TRNASYNTHTHR"/>
</dbReference>
<dbReference type="SMART" id="SM00863">
    <property type="entry name" value="tRNA_SAD"/>
    <property type="match status" value="1"/>
</dbReference>
<dbReference type="SUPFAM" id="SSF52954">
    <property type="entry name" value="Class II aaRS ABD-related"/>
    <property type="match status" value="1"/>
</dbReference>
<dbReference type="SUPFAM" id="SSF55681">
    <property type="entry name" value="Class II aaRS and biotin synthetases"/>
    <property type="match status" value="1"/>
</dbReference>
<dbReference type="SUPFAM" id="SSF81271">
    <property type="entry name" value="TGS-like"/>
    <property type="match status" value="1"/>
</dbReference>
<dbReference type="SUPFAM" id="SSF55186">
    <property type="entry name" value="ThrRS/AlaRS common domain"/>
    <property type="match status" value="1"/>
</dbReference>
<dbReference type="PROSITE" id="PS50862">
    <property type="entry name" value="AA_TRNA_LIGASE_II"/>
    <property type="match status" value="1"/>
</dbReference>
<dbReference type="PROSITE" id="PS51880">
    <property type="entry name" value="TGS"/>
    <property type="match status" value="1"/>
</dbReference>
<accession>B5EN57</accession>
<organism>
    <name type="scientific">Acidithiobacillus ferrooxidans (strain ATCC 53993 / BNL-5-31)</name>
    <name type="common">Leptospirillum ferrooxidans (ATCC 53993)</name>
    <dbReference type="NCBI Taxonomy" id="380394"/>
    <lineage>
        <taxon>Bacteria</taxon>
        <taxon>Pseudomonadati</taxon>
        <taxon>Pseudomonadota</taxon>
        <taxon>Acidithiobacillia</taxon>
        <taxon>Acidithiobacillales</taxon>
        <taxon>Acidithiobacillaceae</taxon>
        <taxon>Acidithiobacillus</taxon>
    </lineage>
</organism>
<comment type="function">
    <text evidence="1">Catalyzes the attachment of threonine to tRNA(Thr) in a two-step reaction: L-threonine is first activated by ATP to form Thr-AMP and then transferred to the acceptor end of tRNA(Thr). Also edits incorrectly charged L-seryl-tRNA(Thr).</text>
</comment>
<comment type="catalytic activity">
    <reaction evidence="1">
        <text>tRNA(Thr) + L-threonine + ATP = L-threonyl-tRNA(Thr) + AMP + diphosphate + H(+)</text>
        <dbReference type="Rhea" id="RHEA:24624"/>
        <dbReference type="Rhea" id="RHEA-COMP:9670"/>
        <dbReference type="Rhea" id="RHEA-COMP:9704"/>
        <dbReference type="ChEBI" id="CHEBI:15378"/>
        <dbReference type="ChEBI" id="CHEBI:30616"/>
        <dbReference type="ChEBI" id="CHEBI:33019"/>
        <dbReference type="ChEBI" id="CHEBI:57926"/>
        <dbReference type="ChEBI" id="CHEBI:78442"/>
        <dbReference type="ChEBI" id="CHEBI:78534"/>
        <dbReference type="ChEBI" id="CHEBI:456215"/>
        <dbReference type="EC" id="6.1.1.3"/>
    </reaction>
</comment>
<comment type="cofactor">
    <cofactor evidence="1">
        <name>Zn(2+)</name>
        <dbReference type="ChEBI" id="CHEBI:29105"/>
    </cofactor>
    <text evidence="1">Binds 1 zinc ion per subunit.</text>
</comment>
<comment type="subunit">
    <text evidence="1">Homodimer.</text>
</comment>
<comment type="subcellular location">
    <subcellularLocation>
        <location evidence="1">Cytoplasm</location>
    </subcellularLocation>
</comment>
<comment type="similarity">
    <text evidence="1">Belongs to the class-II aminoacyl-tRNA synthetase family.</text>
</comment>
<reference key="1">
    <citation type="submission" date="2008-08" db="EMBL/GenBank/DDBJ databases">
        <title>Complete sequence of Acidithiobacillus ferrooxidans ATCC 53993.</title>
        <authorList>
            <person name="Lucas S."/>
            <person name="Copeland A."/>
            <person name="Lapidus A."/>
            <person name="Glavina del Rio T."/>
            <person name="Dalin E."/>
            <person name="Tice H."/>
            <person name="Bruce D."/>
            <person name="Goodwin L."/>
            <person name="Pitluck S."/>
            <person name="Sims D."/>
            <person name="Brettin T."/>
            <person name="Detter J.C."/>
            <person name="Han C."/>
            <person name="Kuske C.R."/>
            <person name="Larimer F."/>
            <person name="Land M."/>
            <person name="Hauser L."/>
            <person name="Kyrpides N."/>
            <person name="Lykidis A."/>
            <person name="Borole A.P."/>
        </authorList>
    </citation>
    <scope>NUCLEOTIDE SEQUENCE [LARGE SCALE GENOMIC DNA]</scope>
    <source>
        <strain>ATCC 53993 / BNL-5-31</strain>
    </source>
</reference>
<name>SYT_ACIF5</name>
<feature type="chain" id="PRO_1000203896" description="Threonine--tRNA ligase">
    <location>
        <begin position="1"/>
        <end position="644"/>
    </location>
</feature>
<feature type="domain" description="TGS" evidence="2">
    <location>
        <begin position="1"/>
        <end position="61"/>
    </location>
</feature>
<feature type="region of interest" description="Catalytic" evidence="1">
    <location>
        <begin position="242"/>
        <end position="535"/>
    </location>
</feature>
<feature type="binding site" evidence="1">
    <location>
        <position position="335"/>
    </location>
    <ligand>
        <name>Zn(2+)</name>
        <dbReference type="ChEBI" id="CHEBI:29105"/>
    </ligand>
</feature>
<feature type="binding site" evidence="1">
    <location>
        <position position="386"/>
    </location>
    <ligand>
        <name>Zn(2+)</name>
        <dbReference type="ChEBI" id="CHEBI:29105"/>
    </ligand>
</feature>
<feature type="binding site" evidence="1">
    <location>
        <position position="512"/>
    </location>
    <ligand>
        <name>Zn(2+)</name>
        <dbReference type="ChEBI" id="CHEBI:29105"/>
    </ligand>
</feature>
<keyword id="KW-0030">Aminoacyl-tRNA synthetase</keyword>
<keyword id="KW-0067">ATP-binding</keyword>
<keyword id="KW-0963">Cytoplasm</keyword>
<keyword id="KW-0436">Ligase</keyword>
<keyword id="KW-0479">Metal-binding</keyword>
<keyword id="KW-0547">Nucleotide-binding</keyword>
<keyword id="KW-0648">Protein biosynthesis</keyword>
<keyword id="KW-0694">RNA-binding</keyword>
<keyword id="KW-0820">tRNA-binding</keyword>
<keyword id="KW-0862">Zinc</keyword>
<gene>
    <name evidence="1" type="primary">thrS</name>
    <name type="ordered locus">Lferr_2243</name>
</gene>
<sequence length="644" mass="72564">MPDIQLPDGSHRQFAEPVTGLTLARAIGSGLARAAVAMRVDGILKDLSAVLDQDAEVAIVTRDSADGLEVIRHSTAHLLAQAVQSLYPEAQVTIGPVIDNGFYYDFAFPRGFTPEDLEAIEARMHALVKENLPVQREMLSREDAIALFEKMGEDYKVEIIRAIPRGEPLSLYRQGDFVDLCRGPHVPSTGVLGAFKLQRVAGAYWRGDSRNPMLQRIYGTAWAQQKDLDAYLQQLAEAEKRDHRRIGTELELFSIQEDAGGGLVFWHPMGSRVRRVIEDFWKEAHVEAGYDLLYTPHIAHEQLWYTSGHKDFYSESMFDPMQDEGQAYQLKPMNCPFHILIYKDKLHSYRDLPIRWAELGTVYRHEMSGALHGLMRVRGFTQDDAHVFCRPDQIEAEIGAVLVLVRKILGTFGFDQYEINLSTRPGHSVGSDEIWDAATQALRNALERAGLEYQVDAGGGAFYGPKIDLKIQDAIGRKWQCSTVQLDFNLPERFAMEYVAEDGARKVPIMVHRAIFGSIERFFGVLIEHYEGKFPVWLAPVQAVVLPISEHYSEYAESVSDVLVKRGIRAETDLRNEKIGYKIRAHTLRRVPYLLVVGEREKEAGTVAVRDRNGQDLGTLSIDAVGATLQKMDQARVNTLEWQG</sequence>
<protein>
    <recommendedName>
        <fullName evidence="1">Threonine--tRNA ligase</fullName>
        <ecNumber evidence="1">6.1.1.3</ecNumber>
    </recommendedName>
    <alternativeName>
        <fullName evidence="1">Threonyl-tRNA synthetase</fullName>
        <shortName evidence="1">ThrRS</shortName>
    </alternativeName>
</protein>